<gene>
    <name type="primary">yjfJ</name>
    <name type="ordered locus">b4182</name>
    <name type="ordered locus">JW4140</name>
</gene>
<organism>
    <name type="scientific">Escherichia coli (strain K12)</name>
    <dbReference type="NCBI Taxonomy" id="83333"/>
    <lineage>
        <taxon>Bacteria</taxon>
        <taxon>Pseudomonadati</taxon>
        <taxon>Pseudomonadota</taxon>
        <taxon>Gammaproteobacteria</taxon>
        <taxon>Enterobacterales</taxon>
        <taxon>Enterobacteriaceae</taxon>
        <taxon>Escherichia</taxon>
    </lineage>
</organism>
<name>YJFJ_ECOLI</name>
<reference key="1">
    <citation type="journal article" date="1995" name="Nucleic Acids Res.">
        <title>Analysis of the Escherichia coli genome VI: DNA sequence of the region from 92.8 through 100 minutes.</title>
        <authorList>
            <person name="Burland V.D."/>
            <person name="Plunkett G. III"/>
            <person name="Sofia H.J."/>
            <person name="Daniels D.L."/>
            <person name="Blattner F.R."/>
        </authorList>
    </citation>
    <scope>NUCLEOTIDE SEQUENCE [LARGE SCALE GENOMIC DNA]</scope>
    <source>
        <strain>K12 / MG1655 / ATCC 47076</strain>
    </source>
</reference>
<reference key="2">
    <citation type="journal article" date="1997" name="Science">
        <title>The complete genome sequence of Escherichia coli K-12.</title>
        <authorList>
            <person name="Blattner F.R."/>
            <person name="Plunkett G. III"/>
            <person name="Bloch C.A."/>
            <person name="Perna N.T."/>
            <person name="Burland V."/>
            <person name="Riley M."/>
            <person name="Collado-Vides J."/>
            <person name="Glasner J.D."/>
            <person name="Rode C.K."/>
            <person name="Mayhew G.F."/>
            <person name="Gregor J."/>
            <person name="Davis N.W."/>
            <person name="Kirkpatrick H.A."/>
            <person name="Goeden M.A."/>
            <person name="Rose D.J."/>
            <person name="Mau B."/>
            <person name="Shao Y."/>
        </authorList>
    </citation>
    <scope>NUCLEOTIDE SEQUENCE [LARGE SCALE GENOMIC DNA]</scope>
    <source>
        <strain>K12 / MG1655 / ATCC 47076</strain>
    </source>
</reference>
<reference key="3">
    <citation type="journal article" date="2006" name="Mol. Syst. Biol.">
        <title>Highly accurate genome sequences of Escherichia coli K-12 strains MG1655 and W3110.</title>
        <authorList>
            <person name="Hayashi K."/>
            <person name="Morooka N."/>
            <person name="Yamamoto Y."/>
            <person name="Fujita K."/>
            <person name="Isono K."/>
            <person name="Choi S."/>
            <person name="Ohtsubo E."/>
            <person name="Baba T."/>
            <person name="Wanner B.L."/>
            <person name="Mori H."/>
            <person name="Horiuchi T."/>
        </authorList>
    </citation>
    <scope>NUCLEOTIDE SEQUENCE [LARGE SCALE GENOMIC DNA]</scope>
    <source>
        <strain>K12 / W3110 / ATCC 27325 / DSM 5911</strain>
    </source>
</reference>
<comment type="similarity">
    <text evidence="3">Belongs to the PspA/Vipp/IM30 family.</text>
</comment>
<proteinExistence type="inferred from homology"/>
<sequence length="232" mass="25334">MGILKSLFTLGKSFISQAEESIEETQGVRMLEQHIRDAKAELDKAGKSRVDLLARVKLSHDKLKDLRERKASLEARALEALSKNVNPSLINEVAEEIARLENLITAEEQVLSNLEVSRDGVEKAVTATAQRIAQFEQQMEVVKATEAMQRAQQAVTTSTVGASSSVSTAAESLKRLQTRQAERQARLDAAAQLEKVADGRDLDEKLAEAGIGGSNKSSAQDVLARLQRQQGE</sequence>
<dbReference type="EMBL" id="U14003">
    <property type="protein sequence ID" value="AAA97078.1"/>
    <property type="molecule type" value="Genomic_DNA"/>
</dbReference>
<dbReference type="EMBL" id="U00096">
    <property type="protein sequence ID" value="AAC77139.1"/>
    <property type="molecule type" value="Genomic_DNA"/>
</dbReference>
<dbReference type="EMBL" id="AP009048">
    <property type="protein sequence ID" value="BAE78183.1"/>
    <property type="molecule type" value="Genomic_DNA"/>
</dbReference>
<dbReference type="PIR" id="S56407">
    <property type="entry name" value="S56407"/>
</dbReference>
<dbReference type="RefSeq" id="NP_418603.1">
    <property type="nucleotide sequence ID" value="NC_000913.3"/>
</dbReference>
<dbReference type="RefSeq" id="WP_000511955.1">
    <property type="nucleotide sequence ID" value="NZ_STEB01000013.1"/>
</dbReference>
<dbReference type="SMR" id="P0AF78"/>
<dbReference type="BioGRID" id="4261345">
    <property type="interactions" value="12"/>
</dbReference>
<dbReference type="FunCoup" id="P0AF78">
    <property type="interactions" value="20"/>
</dbReference>
<dbReference type="IntAct" id="P0AF78">
    <property type="interactions" value="3"/>
</dbReference>
<dbReference type="STRING" id="511145.b4182"/>
<dbReference type="PaxDb" id="511145-b4182"/>
<dbReference type="EnsemblBacteria" id="AAC77139">
    <property type="protein sequence ID" value="AAC77139"/>
    <property type="gene ID" value="b4182"/>
</dbReference>
<dbReference type="GeneID" id="948703"/>
<dbReference type="KEGG" id="ecj:JW4140"/>
<dbReference type="KEGG" id="eco:b4182"/>
<dbReference type="KEGG" id="ecoc:C3026_22595"/>
<dbReference type="PATRIC" id="fig|511145.12.peg.4314"/>
<dbReference type="EchoBASE" id="EB2378"/>
<dbReference type="eggNOG" id="COG1842">
    <property type="taxonomic scope" value="Bacteria"/>
</dbReference>
<dbReference type="HOGENOM" id="CLU_102201_0_1_6"/>
<dbReference type="InParanoid" id="P0AF78"/>
<dbReference type="OMA" id="MSTWGKI"/>
<dbReference type="OrthoDB" id="8844617at2"/>
<dbReference type="PhylomeDB" id="P0AF78"/>
<dbReference type="BioCyc" id="EcoCyc:G7847-MONOMER"/>
<dbReference type="PRO" id="PR:P0AF78"/>
<dbReference type="Proteomes" id="UP000000625">
    <property type="component" value="Chromosome"/>
</dbReference>
<dbReference type="GO" id="GO:0042802">
    <property type="term" value="F:identical protein binding"/>
    <property type="evidence" value="ECO:0000314"/>
    <property type="project" value="EcoCyc"/>
</dbReference>
<dbReference type="InterPro" id="IPR007157">
    <property type="entry name" value="PspA_VIPP1"/>
</dbReference>
<dbReference type="PANTHER" id="PTHR31088">
    <property type="entry name" value="MEMBRANE-ASSOCIATED PROTEIN VIPP1, CHLOROPLASTIC"/>
    <property type="match status" value="1"/>
</dbReference>
<dbReference type="PANTHER" id="PTHR31088:SF9">
    <property type="entry name" value="PHAGE SHOCK PROTEIN A"/>
    <property type="match status" value="1"/>
</dbReference>
<dbReference type="Pfam" id="PF04012">
    <property type="entry name" value="PspA_IM30"/>
    <property type="match status" value="1"/>
</dbReference>
<accession>P0AF78</accession>
<accession>P39292</accession>
<accession>Q2M6C3</accession>
<evidence type="ECO:0000255" key="1"/>
<evidence type="ECO:0000256" key="2">
    <source>
        <dbReference type="SAM" id="MobiDB-lite"/>
    </source>
</evidence>
<evidence type="ECO:0000305" key="3"/>
<protein>
    <recommendedName>
        <fullName>Uncharacterized protein YjfJ</fullName>
    </recommendedName>
</protein>
<keyword id="KW-1185">Reference proteome</keyword>
<keyword id="KW-0732">Signal</keyword>
<feature type="signal peptide" evidence="1">
    <location>
        <begin position="1"/>
        <end position="18"/>
    </location>
</feature>
<feature type="chain" id="PRO_0000029847" description="Uncharacterized protein YjfJ">
    <location>
        <begin position="19"/>
        <end position="232"/>
    </location>
</feature>
<feature type="region of interest" description="Disordered" evidence="2">
    <location>
        <begin position="207"/>
        <end position="232"/>
    </location>
</feature>